<gene>
    <name evidence="1" type="primary">rplK</name>
    <name type="ordered locus">HRM2_36360</name>
</gene>
<dbReference type="EMBL" id="CP001087">
    <property type="protein sequence ID" value="ACN16701.1"/>
    <property type="molecule type" value="Genomic_DNA"/>
</dbReference>
<dbReference type="RefSeq" id="WP_015905451.1">
    <property type="nucleotide sequence ID" value="NC_012108.1"/>
</dbReference>
<dbReference type="SMR" id="C0Q9Y3"/>
<dbReference type="STRING" id="177437.HRM2_36360"/>
<dbReference type="KEGG" id="dat:HRM2_36360"/>
<dbReference type="eggNOG" id="COG0080">
    <property type="taxonomic scope" value="Bacteria"/>
</dbReference>
<dbReference type="HOGENOM" id="CLU_074237_2_1_7"/>
<dbReference type="OrthoDB" id="9802408at2"/>
<dbReference type="Proteomes" id="UP000000442">
    <property type="component" value="Chromosome"/>
</dbReference>
<dbReference type="GO" id="GO:0022625">
    <property type="term" value="C:cytosolic large ribosomal subunit"/>
    <property type="evidence" value="ECO:0007669"/>
    <property type="project" value="TreeGrafter"/>
</dbReference>
<dbReference type="GO" id="GO:0070180">
    <property type="term" value="F:large ribosomal subunit rRNA binding"/>
    <property type="evidence" value="ECO:0007669"/>
    <property type="project" value="UniProtKB-UniRule"/>
</dbReference>
<dbReference type="GO" id="GO:0003735">
    <property type="term" value="F:structural constituent of ribosome"/>
    <property type="evidence" value="ECO:0007669"/>
    <property type="project" value="InterPro"/>
</dbReference>
<dbReference type="GO" id="GO:0006412">
    <property type="term" value="P:translation"/>
    <property type="evidence" value="ECO:0007669"/>
    <property type="project" value="UniProtKB-UniRule"/>
</dbReference>
<dbReference type="CDD" id="cd00349">
    <property type="entry name" value="Ribosomal_L11"/>
    <property type="match status" value="1"/>
</dbReference>
<dbReference type="FunFam" id="1.10.10.250:FF:000001">
    <property type="entry name" value="50S ribosomal protein L11"/>
    <property type="match status" value="1"/>
</dbReference>
<dbReference type="FunFam" id="3.30.1550.10:FF:000001">
    <property type="entry name" value="50S ribosomal protein L11"/>
    <property type="match status" value="1"/>
</dbReference>
<dbReference type="Gene3D" id="1.10.10.250">
    <property type="entry name" value="Ribosomal protein L11, C-terminal domain"/>
    <property type="match status" value="1"/>
</dbReference>
<dbReference type="Gene3D" id="3.30.1550.10">
    <property type="entry name" value="Ribosomal protein L11/L12, N-terminal domain"/>
    <property type="match status" value="1"/>
</dbReference>
<dbReference type="HAMAP" id="MF_00736">
    <property type="entry name" value="Ribosomal_uL11"/>
    <property type="match status" value="1"/>
</dbReference>
<dbReference type="InterPro" id="IPR000911">
    <property type="entry name" value="Ribosomal_uL11"/>
</dbReference>
<dbReference type="InterPro" id="IPR006519">
    <property type="entry name" value="Ribosomal_uL11_bac-typ"/>
</dbReference>
<dbReference type="InterPro" id="IPR020783">
    <property type="entry name" value="Ribosomal_uL11_C"/>
</dbReference>
<dbReference type="InterPro" id="IPR036769">
    <property type="entry name" value="Ribosomal_uL11_C_sf"/>
</dbReference>
<dbReference type="InterPro" id="IPR020784">
    <property type="entry name" value="Ribosomal_uL11_N"/>
</dbReference>
<dbReference type="InterPro" id="IPR036796">
    <property type="entry name" value="Ribosomal_uL11_N_sf"/>
</dbReference>
<dbReference type="NCBIfam" id="TIGR01632">
    <property type="entry name" value="L11_bact"/>
    <property type="match status" value="1"/>
</dbReference>
<dbReference type="PANTHER" id="PTHR11661">
    <property type="entry name" value="60S RIBOSOMAL PROTEIN L12"/>
    <property type="match status" value="1"/>
</dbReference>
<dbReference type="PANTHER" id="PTHR11661:SF1">
    <property type="entry name" value="LARGE RIBOSOMAL SUBUNIT PROTEIN UL11M"/>
    <property type="match status" value="1"/>
</dbReference>
<dbReference type="Pfam" id="PF00298">
    <property type="entry name" value="Ribosomal_L11"/>
    <property type="match status" value="1"/>
</dbReference>
<dbReference type="Pfam" id="PF03946">
    <property type="entry name" value="Ribosomal_L11_N"/>
    <property type="match status" value="1"/>
</dbReference>
<dbReference type="SMART" id="SM00649">
    <property type="entry name" value="RL11"/>
    <property type="match status" value="1"/>
</dbReference>
<dbReference type="SUPFAM" id="SSF54747">
    <property type="entry name" value="Ribosomal L11/L12e N-terminal domain"/>
    <property type="match status" value="1"/>
</dbReference>
<dbReference type="SUPFAM" id="SSF46906">
    <property type="entry name" value="Ribosomal protein L11, C-terminal domain"/>
    <property type="match status" value="1"/>
</dbReference>
<accession>C0Q9Y3</accession>
<evidence type="ECO:0000255" key="1">
    <source>
        <dbReference type="HAMAP-Rule" id="MF_00736"/>
    </source>
</evidence>
<evidence type="ECO:0000305" key="2"/>
<reference key="1">
    <citation type="journal article" date="2009" name="Environ. Microbiol.">
        <title>Genome sequence of Desulfobacterium autotrophicum HRM2, a marine sulfate reducer oxidizing organic carbon completely to carbon dioxide.</title>
        <authorList>
            <person name="Strittmatter A.W."/>
            <person name="Liesegang H."/>
            <person name="Rabus R."/>
            <person name="Decker I."/>
            <person name="Amann J."/>
            <person name="Andres S."/>
            <person name="Henne A."/>
            <person name="Fricke W.F."/>
            <person name="Martinez-Arias R."/>
            <person name="Bartels D."/>
            <person name="Goesmann A."/>
            <person name="Krause L."/>
            <person name="Puehler A."/>
            <person name="Klenk H.P."/>
            <person name="Richter M."/>
            <person name="Schuler M."/>
            <person name="Gloeckner F.O."/>
            <person name="Meyerdierks A."/>
            <person name="Gottschalk G."/>
            <person name="Amann R."/>
        </authorList>
    </citation>
    <scope>NUCLEOTIDE SEQUENCE [LARGE SCALE GENOMIC DNA]</scope>
    <source>
        <strain>ATCC 43914 / DSM 3382 / VKM B-1955 / HRM2</strain>
    </source>
</reference>
<protein>
    <recommendedName>
        <fullName evidence="1">Large ribosomal subunit protein uL11</fullName>
    </recommendedName>
    <alternativeName>
        <fullName evidence="2">50S ribosomal protein L11</fullName>
    </alternativeName>
</protein>
<comment type="function">
    <text evidence="1">Forms part of the ribosomal stalk which helps the ribosome interact with GTP-bound translation factors.</text>
</comment>
<comment type="subunit">
    <text evidence="1">Part of the ribosomal stalk of the 50S ribosomal subunit. Interacts with L10 and the large rRNA to form the base of the stalk. L10 forms an elongated spine to which L12 dimers bind in a sequential fashion forming a multimeric L10(L12)X complex.</text>
</comment>
<comment type="PTM">
    <text evidence="1">One or more lysine residues are methylated.</text>
</comment>
<comment type="similarity">
    <text evidence="1">Belongs to the universal ribosomal protein uL11 family.</text>
</comment>
<name>RL11_DESAH</name>
<organism>
    <name type="scientific">Desulforapulum autotrophicum (strain ATCC 43914 / DSM 3382 / VKM B-1955 / HRM2)</name>
    <name type="common">Desulfobacterium autotrophicum</name>
    <dbReference type="NCBI Taxonomy" id="177437"/>
    <lineage>
        <taxon>Bacteria</taxon>
        <taxon>Pseudomonadati</taxon>
        <taxon>Thermodesulfobacteriota</taxon>
        <taxon>Desulfobacteria</taxon>
        <taxon>Desulfobacterales</taxon>
        <taxon>Desulfobacteraceae</taxon>
        <taxon>Desulforapulum</taxon>
    </lineage>
</organism>
<proteinExistence type="inferred from homology"/>
<feature type="chain" id="PRO_1000212769" description="Large ribosomal subunit protein uL11">
    <location>
        <begin position="1"/>
        <end position="140"/>
    </location>
</feature>
<keyword id="KW-0488">Methylation</keyword>
<keyword id="KW-1185">Reference proteome</keyword>
<keyword id="KW-0687">Ribonucleoprotein</keyword>
<keyword id="KW-0689">Ribosomal protein</keyword>
<keyword id="KW-0694">RNA-binding</keyword>
<keyword id="KW-0699">rRNA-binding</keyword>
<sequence length="140" mass="14742">MAKKVMALIKLQVEAGKANPSPPIGPALGQHGVNIMDFCKAFNARTANDAGSIIPVVITVYQDRSFTFITKTPPASMLLKRAAKISKGSGVPNRDKVGKVTHDQLVEIATLKMEDLNAADVDAAVSIIAGTARSMGIEVV</sequence>